<evidence type="ECO:0000250" key="1"/>
<evidence type="ECO:0000250" key="2">
    <source>
        <dbReference type="UniProtKB" id="P0A817"/>
    </source>
</evidence>
<evidence type="ECO:0000250" key="3">
    <source>
        <dbReference type="UniProtKB" id="P13444"/>
    </source>
</evidence>
<evidence type="ECO:0000250" key="4">
    <source>
        <dbReference type="UniProtKB" id="Q00266"/>
    </source>
</evidence>
<evidence type="ECO:0000250" key="5">
    <source>
        <dbReference type="UniProtKB" id="Q96551"/>
    </source>
</evidence>
<evidence type="ECO:0000305" key="6"/>
<dbReference type="EC" id="2.5.1.6" evidence="5"/>
<dbReference type="EMBL" id="DQ235185">
    <property type="protein sequence ID" value="ABB29942.1"/>
    <property type="molecule type" value="mRNA"/>
</dbReference>
<dbReference type="RefSeq" id="NP_001275609.1">
    <property type="nucleotide sequence ID" value="NM_001288680.1"/>
</dbReference>
<dbReference type="SMR" id="Q307Y9"/>
<dbReference type="FunCoup" id="Q307Y9">
    <property type="interactions" value="2529"/>
</dbReference>
<dbReference type="STRING" id="4113.Q307Y9"/>
<dbReference type="PaxDb" id="4113-PGSC0003DMT400047146"/>
<dbReference type="EnsemblPlants" id="PGSC0003DMT400047145">
    <property type="protein sequence ID" value="PGSC0003DMT400047145"/>
    <property type="gene ID" value="PGSC0003DMG400018292"/>
</dbReference>
<dbReference type="EnsemblPlants" id="PGSC0003DMT400047146">
    <property type="protein sequence ID" value="PGSC0003DMT400047146"/>
    <property type="gene ID" value="PGSC0003DMG400018292"/>
</dbReference>
<dbReference type="EnsemblPlants" id="RHC01H1G3772.2.1">
    <property type="protein sequence ID" value="RHC01H1G3772.2.1.cds.1"/>
    <property type="gene ID" value="RHC01H1G3772.2"/>
</dbReference>
<dbReference type="GeneID" id="102588511"/>
<dbReference type="Gramene" id="PGSC0003DMT400047145">
    <property type="protein sequence ID" value="PGSC0003DMT400047145"/>
    <property type="gene ID" value="PGSC0003DMG400018292"/>
</dbReference>
<dbReference type="Gramene" id="PGSC0003DMT400047146">
    <property type="protein sequence ID" value="PGSC0003DMT400047146"/>
    <property type="gene ID" value="PGSC0003DMG400018292"/>
</dbReference>
<dbReference type="Gramene" id="RHC01H1G3772.2.1">
    <property type="protein sequence ID" value="RHC01H1G3772.2.1.cds.1"/>
    <property type="gene ID" value="RHC01H1G3772.2"/>
</dbReference>
<dbReference type="KEGG" id="sot:102588511"/>
<dbReference type="eggNOG" id="KOG1506">
    <property type="taxonomic scope" value="Eukaryota"/>
</dbReference>
<dbReference type="HOGENOM" id="CLU_041802_0_1_1"/>
<dbReference type="InParanoid" id="Q307Y9"/>
<dbReference type="OMA" id="ASYMARY"/>
<dbReference type="OrthoDB" id="5852090at2759"/>
<dbReference type="UniPathway" id="UPA00315">
    <property type="reaction ID" value="UER00080"/>
</dbReference>
<dbReference type="Proteomes" id="UP000011115">
    <property type="component" value="Unassembled WGS sequence"/>
</dbReference>
<dbReference type="ExpressionAtlas" id="Q307Y9">
    <property type="expression patterns" value="baseline and differential"/>
</dbReference>
<dbReference type="GO" id="GO:0005829">
    <property type="term" value="C:cytosol"/>
    <property type="evidence" value="ECO:0000318"/>
    <property type="project" value="GO_Central"/>
</dbReference>
<dbReference type="GO" id="GO:0005524">
    <property type="term" value="F:ATP binding"/>
    <property type="evidence" value="ECO:0007669"/>
    <property type="project" value="UniProtKB-KW"/>
</dbReference>
<dbReference type="GO" id="GO:0046872">
    <property type="term" value="F:metal ion binding"/>
    <property type="evidence" value="ECO:0007669"/>
    <property type="project" value="UniProtKB-KW"/>
</dbReference>
<dbReference type="GO" id="GO:0004478">
    <property type="term" value="F:methionine adenosyltransferase activity"/>
    <property type="evidence" value="ECO:0000318"/>
    <property type="project" value="GO_Central"/>
</dbReference>
<dbReference type="GO" id="GO:0006730">
    <property type="term" value="P:one-carbon metabolic process"/>
    <property type="evidence" value="ECO:0007669"/>
    <property type="project" value="UniProtKB-KW"/>
</dbReference>
<dbReference type="GO" id="GO:0006556">
    <property type="term" value="P:S-adenosylmethionine biosynthetic process"/>
    <property type="evidence" value="ECO:0000318"/>
    <property type="project" value="GO_Central"/>
</dbReference>
<dbReference type="CDD" id="cd18079">
    <property type="entry name" value="S-AdoMet_synt"/>
    <property type="match status" value="1"/>
</dbReference>
<dbReference type="FunFam" id="3.30.300.10:FF:000001">
    <property type="entry name" value="S-adenosylmethionine synthase"/>
    <property type="match status" value="1"/>
</dbReference>
<dbReference type="FunFam" id="3.30.300.10:FF:000003">
    <property type="entry name" value="S-adenosylmethionine synthase"/>
    <property type="match status" value="1"/>
</dbReference>
<dbReference type="FunFam" id="3.30.300.10:FF:000004">
    <property type="entry name" value="S-adenosylmethionine synthase"/>
    <property type="match status" value="1"/>
</dbReference>
<dbReference type="Gene3D" id="3.30.300.10">
    <property type="match status" value="3"/>
</dbReference>
<dbReference type="HAMAP" id="MF_00086">
    <property type="entry name" value="S_AdoMet_synth1"/>
    <property type="match status" value="1"/>
</dbReference>
<dbReference type="InterPro" id="IPR022631">
    <property type="entry name" value="ADOMET_SYNTHASE_CS"/>
</dbReference>
<dbReference type="InterPro" id="IPR022630">
    <property type="entry name" value="S-AdoMet_synt_C"/>
</dbReference>
<dbReference type="InterPro" id="IPR022629">
    <property type="entry name" value="S-AdoMet_synt_central"/>
</dbReference>
<dbReference type="InterPro" id="IPR022628">
    <property type="entry name" value="S-AdoMet_synt_N"/>
</dbReference>
<dbReference type="InterPro" id="IPR002133">
    <property type="entry name" value="S-AdoMet_synthetase"/>
</dbReference>
<dbReference type="InterPro" id="IPR022636">
    <property type="entry name" value="S-AdoMet_synthetase_sfam"/>
</dbReference>
<dbReference type="NCBIfam" id="TIGR01034">
    <property type="entry name" value="metK"/>
    <property type="match status" value="1"/>
</dbReference>
<dbReference type="PANTHER" id="PTHR11964">
    <property type="entry name" value="S-ADENOSYLMETHIONINE SYNTHETASE"/>
    <property type="match status" value="1"/>
</dbReference>
<dbReference type="Pfam" id="PF02773">
    <property type="entry name" value="S-AdoMet_synt_C"/>
    <property type="match status" value="1"/>
</dbReference>
<dbReference type="Pfam" id="PF02772">
    <property type="entry name" value="S-AdoMet_synt_M"/>
    <property type="match status" value="1"/>
</dbReference>
<dbReference type="Pfam" id="PF00438">
    <property type="entry name" value="S-AdoMet_synt_N"/>
    <property type="match status" value="1"/>
</dbReference>
<dbReference type="PIRSF" id="PIRSF000497">
    <property type="entry name" value="MAT"/>
    <property type="match status" value="1"/>
</dbReference>
<dbReference type="SUPFAM" id="SSF55973">
    <property type="entry name" value="S-adenosylmethionine synthetase"/>
    <property type="match status" value="3"/>
</dbReference>
<dbReference type="PROSITE" id="PS00376">
    <property type="entry name" value="ADOMET_SYNTHASE_1"/>
    <property type="match status" value="1"/>
</dbReference>
<dbReference type="PROSITE" id="PS00377">
    <property type="entry name" value="ADOMET_SYNTHASE_2"/>
    <property type="match status" value="1"/>
</dbReference>
<keyword id="KW-0067">ATP-binding</keyword>
<keyword id="KW-0170">Cobalt</keyword>
<keyword id="KW-0963">Cytoplasm</keyword>
<keyword id="KW-0460">Magnesium</keyword>
<keyword id="KW-0479">Metal-binding</keyword>
<keyword id="KW-0547">Nucleotide-binding</keyword>
<keyword id="KW-0554">One-carbon metabolism</keyword>
<keyword id="KW-0630">Potassium</keyword>
<keyword id="KW-1185">Reference proteome</keyword>
<keyword id="KW-0808">Transferase</keyword>
<comment type="function">
    <text evidence="5">Catalyzes the formation of S-adenosylmethionine from methionine and ATP. The reaction comprises two steps that are both catalyzed by the same enzyme: formation of S-adenosylmethionine (AdoMet) and triphosphate, and subsequent hydrolysis of the triphosphate.</text>
</comment>
<comment type="catalytic activity">
    <reaction evidence="5">
        <text>L-methionine + ATP + H2O = S-adenosyl-L-methionine + phosphate + diphosphate</text>
        <dbReference type="Rhea" id="RHEA:21080"/>
        <dbReference type="ChEBI" id="CHEBI:15377"/>
        <dbReference type="ChEBI" id="CHEBI:30616"/>
        <dbReference type="ChEBI" id="CHEBI:33019"/>
        <dbReference type="ChEBI" id="CHEBI:43474"/>
        <dbReference type="ChEBI" id="CHEBI:57844"/>
        <dbReference type="ChEBI" id="CHEBI:59789"/>
        <dbReference type="EC" id="2.5.1.6"/>
    </reaction>
</comment>
<comment type="cofactor">
    <cofactor evidence="5">
        <name>Mn(2+)</name>
        <dbReference type="ChEBI" id="CHEBI:29035"/>
    </cofactor>
    <cofactor evidence="5">
        <name>Mg(2+)</name>
        <dbReference type="ChEBI" id="CHEBI:18420"/>
    </cofactor>
    <cofactor evidence="5">
        <name>Co(2+)</name>
        <dbReference type="ChEBI" id="CHEBI:48828"/>
    </cofactor>
    <text evidence="3 5">Binds 2 divalent ions per subunit. The metal ions interact primarily with the substrate (By similarity). Can utilize magnesium, manganese or cobalt (in vitro) (By similarity).</text>
</comment>
<comment type="cofactor">
    <cofactor evidence="5">
        <name>K(+)</name>
        <dbReference type="ChEBI" id="CHEBI:29103"/>
    </cofactor>
    <text evidence="3">Binds 1 potassium ion per subunit. The potassium ion interacts primarily with the substrate (By similarity).</text>
</comment>
<comment type="pathway">
    <text evidence="5">Amino-acid biosynthesis; S-adenosyl-L-methionine biosynthesis; S-adenosyl-L-methionine from L-methionine: step 1/1.</text>
</comment>
<comment type="subunit">
    <text evidence="1">Homotetramer.</text>
</comment>
<comment type="subcellular location">
    <subcellularLocation>
        <location evidence="1">Cytoplasm</location>
    </subcellularLocation>
</comment>
<comment type="similarity">
    <text evidence="6">Belongs to the AdoMet synthase family.</text>
</comment>
<feature type="chain" id="PRO_0000363048" description="S-adenosylmethionine synthase 1">
    <location>
        <begin position="1"/>
        <end position="393"/>
    </location>
</feature>
<feature type="binding site" evidence="3">
    <location>
        <position position="9"/>
    </location>
    <ligand>
        <name>Mg(2+)</name>
        <dbReference type="ChEBI" id="CHEBI:18420"/>
    </ligand>
</feature>
<feature type="binding site" description="in other chain" evidence="4">
    <location>
        <position position="15"/>
    </location>
    <ligand>
        <name>ATP</name>
        <dbReference type="ChEBI" id="CHEBI:30616"/>
        <note>ligand shared between two neighboring subunits</note>
    </ligand>
</feature>
<feature type="binding site" evidence="2">
    <location>
        <position position="43"/>
    </location>
    <ligand>
        <name>K(+)</name>
        <dbReference type="ChEBI" id="CHEBI:29103"/>
    </ligand>
</feature>
<feature type="binding site" description="in other chain" evidence="2">
    <location>
        <position position="56"/>
    </location>
    <ligand>
        <name>L-methionine</name>
        <dbReference type="ChEBI" id="CHEBI:57844"/>
        <note>ligand shared between two neighboring subunits</note>
    </ligand>
</feature>
<feature type="binding site" description="in other chain" evidence="2">
    <location>
        <position position="99"/>
    </location>
    <ligand>
        <name>L-methionine</name>
        <dbReference type="ChEBI" id="CHEBI:57844"/>
        <note>ligand shared between two neighboring subunits</note>
    </ligand>
</feature>
<feature type="binding site" description="in other chain" evidence="4">
    <location>
        <begin position="167"/>
        <end position="169"/>
    </location>
    <ligand>
        <name>ATP</name>
        <dbReference type="ChEBI" id="CHEBI:30616"/>
        <note>ligand shared between two neighboring subunits</note>
    </ligand>
</feature>
<feature type="binding site" description="in other chain" evidence="4">
    <location>
        <begin position="235"/>
        <end position="238"/>
    </location>
    <ligand>
        <name>ATP</name>
        <dbReference type="ChEBI" id="CHEBI:30616"/>
        <note>ligand shared between two neighboring subunits</note>
    </ligand>
</feature>
<feature type="binding site" description="in other chain" evidence="4">
    <location>
        <position position="246"/>
    </location>
    <ligand>
        <name>ATP</name>
        <dbReference type="ChEBI" id="CHEBI:30616"/>
        <note>ligand shared between two neighboring subunits</note>
    </ligand>
</feature>
<feature type="binding site" evidence="2">
    <location>
        <position position="246"/>
    </location>
    <ligand>
        <name>L-methionine</name>
        <dbReference type="ChEBI" id="CHEBI:57844"/>
        <note>ligand shared between two neighboring subunits</note>
    </ligand>
</feature>
<feature type="binding site" description="in other chain" evidence="2">
    <location>
        <begin position="252"/>
        <end position="253"/>
    </location>
    <ligand>
        <name>ATP</name>
        <dbReference type="ChEBI" id="CHEBI:30616"/>
        <note>ligand shared between two neighboring subunits</note>
    </ligand>
</feature>
<feature type="binding site" evidence="2">
    <location>
        <position position="269"/>
    </location>
    <ligand>
        <name>ATP</name>
        <dbReference type="ChEBI" id="CHEBI:30616"/>
        <note>ligand shared between two neighboring subunits</note>
    </ligand>
</feature>
<feature type="binding site" evidence="2">
    <location>
        <position position="273"/>
    </location>
    <ligand>
        <name>ATP</name>
        <dbReference type="ChEBI" id="CHEBI:30616"/>
        <note>ligand shared between two neighboring subunits</note>
    </ligand>
</feature>
<feature type="binding site" evidence="3">
    <location>
        <position position="277"/>
    </location>
    <ligand>
        <name>ATP</name>
        <dbReference type="ChEBI" id="CHEBI:30616"/>
        <note>ligand shared between two neighboring subunits</note>
    </ligand>
</feature>
<feature type="binding site" description="in other chain" evidence="2">
    <location>
        <position position="277"/>
    </location>
    <ligand>
        <name>L-methionine</name>
        <dbReference type="ChEBI" id="CHEBI:57844"/>
        <note>ligand shared between two neighboring subunits</note>
    </ligand>
</feature>
<protein>
    <recommendedName>
        <fullName>S-adenosylmethionine synthase 1</fullName>
        <shortName>AdoMet synthase 1</shortName>
        <ecNumber evidence="5">2.5.1.6</ecNumber>
    </recommendedName>
    <alternativeName>
        <fullName>Methionine adenosyltransferase 1</fullName>
        <shortName>MAT 1</shortName>
    </alternativeName>
</protein>
<organism>
    <name type="scientific">Solanum tuberosum</name>
    <name type="common">Potato</name>
    <dbReference type="NCBI Taxonomy" id="4113"/>
    <lineage>
        <taxon>Eukaryota</taxon>
        <taxon>Viridiplantae</taxon>
        <taxon>Streptophyta</taxon>
        <taxon>Embryophyta</taxon>
        <taxon>Tracheophyta</taxon>
        <taxon>Spermatophyta</taxon>
        <taxon>Magnoliopsida</taxon>
        <taxon>eudicotyledons</taxon>
        <taxon>Gunneridae</taxon>
        <taxon>Pentapetalae</taxon>
        <taxon>asterids</taxon>
        <taxon>lamiids</taxon>
        <taxon>Solanales</taxon>
        <taxon>Solanaceae</taxon>
        <taxon>Solanoideae</taxon>
        <taxon>Solaneae</taxon>
        <taxon>Solanum</taxon>
    </lineage>
</organism>
<sequence>METFLFTSESVNEGHPDKLCDQISDAVLDACLEQDPESKVACETCTKTNLVMVFGEITTKAIVDYEKIVRDTCRNIGFVSDDVGLDADNCKVLVYIEQQSPDIAQGVHGHLTKRPEEIGAGDQGHMFGYATDETPELMPLSHVLATKLGARLTEVRKNGTCPWLRPDGKTQVTVEYCNDNGAMIPIKVHTVLISTQHDETVTNDEIARDLKEHVIKPVIPEKYLDEKTIFHLNPSGRFVIGGPHGDAGLTGRKIIIDTYGGWGAHGGGAFSGKDPTKVDRSGAYIVRQAAKSIVASGLARRCIVQVSYAIGVPEPLSVFVDTYGTGKIPDKEILKIVKENFDFRPGMMSINLDLKRGGNGRFLKTAAYGHFGRDDPDFTWEVVKPLKWEKPQD</sequence>
<accession>Q307Y9</accession>
<gene>
    <name type="primary">METK1</name>
</gene>
<reference key="1">
    <citation type="submission" date="2005-10" db="EMBL/GenBank/DDBJ databases">
        <title>Full length sequencing of Solanum tuberosum cv. Kuras genes.</title>
        <authorList>
            <person name="Nielsen K.L."/>
            <person name="Welinder K.G."/>
            <person name="Nielsen H.V."/>
            <person name="Emmersen J.M.G."/>
        </authorList>
    </citation>
    <scope>NUCLEOTIDE SEQUENCE [LARGE SCALE MRNA]</scope>
    <source>
        <strain>cv. Kuras</strain>
        <tissue>Tuber</tissue>
    </source>
</reference>
<reference key="2">
    <citation type="journal article" date="2011" name="Nature">
        <title>Genome sequence and analysis of the tuber crop potato.</title>
        <authorList>
            <consortium name="The Potato Genome Sequencing Consortium"/>
        </authorList>
    </citation>
    <scope>NUCLEOTIDE SEQUENCE [LARGE SCALE GENOMIC DNA]</scope>
    <source>
        <strain>cv. DM1-3 516 R44</strain>
    </source>
</reference>
<proteinExistence type="evidence at transcript level"/>
<name>METK1_SOLTU</name>